<organism evidence="40">
    <name type="scientific">Drosophila melanogaster</name>
    <name type="common">Fruit fly</name>
    <dbReference type="NCBI Taxonomy" id="7227"/>
    <lineage>
        <taxon>Eukaryota</taxon>
        <taxon>Metazoa</taxon>
        <taxon>Ecdysozoa</taxon>
        <taxon>Arthropoda</taxon>
        <taxon>Hexapoda</taxon>
        <taxon>Insecta</taxon>
        <taxon>Pterygota</taxon>
        <taxon>Neoptera</taxon>
        <taxon>Endopterygota</taxon>
        <taxon>Diptera</taxon>
        <taxon>Brachycera</taxon>
        <taxon>Muscomorpha</taxon>
        <taxon>Ephydroidea</taxon>
        <taxon>Drosophilidae</taxon>
        <taxon>Drosophila</taxon>
        <taxon>Sophophora</taxon>
    </lineage>
</organism>
<reference evidence="38" key="1">
    <citation type="journal article" date="1998" name="Genes Dev.">
        <title>A novel class of evolutionarily conserved genes defined by piwi are essential for stem cell self-renewal.</title>
        <authorList>
            <person name="Cox D.N."/>
            <person name="Chao A."/>
            <person name="Baker J."/>
            <person name="Chang L."/>
            <person name="Qiao D."/>
            <person name="Lin H."/>
        </authorList>
    </citation>
    <scope>NUCLEOTIDE SEQUENCE [GENOMIC DNA / MRNA]</scope>
    <scope>FUNCTION</scope>
    <scope>DEVELOPMENTAL STAGE</scope>
    <scope>TISSUE SPECIFICITY</scope>
    <scope>DISRUPTION PHENOTYPE</scope>
    <source>
        <strain>Canton-S</strain>
        <strain>Oregon-R</strain>
    </source>
</reference>
<reference key="2">
    <citation type="journal article" date="2012" name="Genetics">
        <title>Long-term and short-term evolutionary impacts of transposable elements on Drosophila.</title>
        <authorList>
            <person name="Lee Y.C."/>
            <person name="Langley C.H."/>
        </authorList>
    </citation>
    <scope>NUCLEOTIDE SEQUENCE [GENOMIC DNA]</scope>
    <source>
        <strain>3846</strain>
        <strain>3852</strain>
        <strain>3854</strain>
        <strain>3892</strain>
        <strain>3893</strain>
        <strain>3894</strain>
        <strain>3895</strain>
    </source>
</reference>
<reference evidence="38" key="3">
    <citation type="journal article" date="2000" name="Science">
        <title>The genome sequence of Drosophila melanogaster.</title>
        <authorList>
            <person name="Adams M.D."/>
            <person name="Celniker S.E."/>
            <person name="Holt R.A."/>
            <person name="Evans C.A."/>
            <person name="Gocayne J.D."/>
            <person name="Amanatides P.G."/>
            <person name="Scherer S.E."/>
            <person name="Li P.W."/>
            <person name="Hoskins R.A."/>
            <person name="Galle R.F."/>
            <person name="George R.A."/>
            <person name="Lewis S.E."/>
            <person name="Richards S."/>
            <person name="Ashburner M."/>
            <person name="Henderson S.N."/>
            <person name="Sutton G.G."/>
            <person name="Wortman J.R."/>
            <person name="Yandell M.D."/>
            <person name="Zhang Q."/>
            <person name="Chen L.X."/>
            <person name="Brandon R.C."/>
            <person name="Rogers Y.-H.C."/>
            <person name="Blazej R.G."/>
            <person name="Champe M."/>
            <person name="Pfeiffer B.D."/>
            <person name="Wan K.H."/>
            <person name="Doyle C."/>
            <person name="Baxter E.G."/>
            <person name="Helt G."/>
            <person name="Nelson C.R."/>
            <person name="Miklos G.L.G."/>
            <person name="Abril J.F."/>
            <person name="Agbayani A."/>
            <person name="An H.-J."/>
            <person name="Andrews-Pfannkoch C."/>
            <person name="Baldwin D."/>
            <person name="Ballew R.M."/>
            <person name="Basu A."/>
            <person name="Baxendale J."/>
            <person name="Bayraktaroglu L."/>
            <person name="Beasley E.M."/>
            <person name="Beeson K.Y."/>
            <person name="Benos P.V."/>
            <person name="Berman B.P."/>
            <person name="Bhandari D."/>
            <person name="Bolshakov S."/>
            <person name="Borkova D."/>
            <person name="Botchan M.R."/>
            <person name="Bouck J."/>
            <person name="Brokstein P."/>
            <person name="Brottier P."/>
            <person name="Burtis K.C."/>
            <person name="Busam D.A."/>
            <person name="Butler H."/>
            <person name="Cadieu E."/>
            <person name="Center A."/>
            <person name="Chandra I."/>
            <person name="Cherry J.M."/>
            <person name="Cawley S."/>
            <person name="Dahlke C."/>
            <person name="Davenport L.B."/>
            <person name="Davies P."/>
            <person name="de Pablos B."/>
            <person name="Delcher A."/>
            <person name="Deng Z."/>
            <person name="Mays A.D."/>
            <person name="Dew I."/>
            <person name="Dietz S.M."/>
            <person name="Dodson K."/>
            <person name="Doup L.E."/>
            <person name="Downes M."/>
            <person name="Dugan-Rocha S."/>
            <person name="Dunkov B.C."/>
            <person name="Dunn P."/>
            <person name="Durbin K.J."/>
            <person name="Evangelista C.C."/>
            <person name="Ferraz C."/>
            <person name="Ferriera S."/>
            <person name="Fleischmann W."/>
            <person name="Fosler C."/>
            <person name="Gabrielian A.E."/>
            <person name="Garg N.S."/>
            <person name="Gelbart W.M."/>
            <person name="Glasser K."/>
            <person name="Glodek A."/>
            <person name="Gong F."/>
            <person name="Gorrell J.H."/>
            <person name="Gu Z."/>
            <person name="Guan P."/>
            <person name="Harris M."/>
            <person name="Harris N.L."/>
            <person name="Harvey D.A."/>
            <person name="Heiman T.J."/>
            <person name="Hernandez J.R."/>
            <person name="Houck J."/>
            <person name="Hostin D."/>
            <person name="Houston K.A."/>
            <person name="Howland T.J."/>
            <person name="Wei M.-H."/>
            <person name="Ibegwam C."/>
            <person name="Jalali M."/>
            <person name="Kalush F."/>
            <person name="Karpen G.H."/>
            <person name="Ke Z."/>
            <person name="Kennison J.A."/>
            <person name="Ketchum K.A."/>
            <person name="Kimmel B.E."/>
            <person name="Kodira C.D."/>
            <person name="Kraft C.L."/>
            <person name="Kravitz S."/>
            <person name="Kulp D."/>
            <person name="Lai Z."/>
            <person name="Lasko P."/>
            <person name="Lei Y."/>
            <person name="Levitsky A.A."/>
            <person name="Li J.H."/>
            <person name="Li Z."/>
            <person name="Liang Y."/>
            <person name="Lin X."/>
            <person name="Liu X."/>
            <person name="Mattei B."/>
            <person name="McIntosh T.C."/>
            <person name="McLeod M.P."/>
            <person name="McPherson D."/>
            <person name="Merkulov G."/>
            <person name="Milshina N.V."/>
            <person name="Mobarry C."/>
            <person name="Morris J."/>
            <person name="Moshrefi A."/>
            <person name="Mount S.M."/>
            <person name="Moy M."/>
            <person name="Murphy B."/>
            <person name="Murphy L."/>
            <person name="Muzny D.M."/>
            <person name="Nelson D.L."/>
            <person name="Nelson D.R."/>
            <person name="Nelson K.A."/>
            <person name="Nixon K."/>
            <person name="Nusskern D.R."/>
            <person name="Pacleb J.M."/>
            <person name="Palazzolo M."/>
            <person name="Pittman G.S."/>
            <person name="Pan S."/>
            <person name="Pollard J."/>
            <person name="Puri V."/>
            <person name="Reese M.G."/>
            <person name="Reinert K."/>
            <person name="Remington K."/>
            <person name="Saunders R.D.C."/>
            <person name="Scheeler F."/>
            <person name="Shen H."/>
            <person name="Shue B.C."/>
            <person name="Siden-Kiamos I."/>
            <person name="Simpson M."/>
            <person name="Skupski M.P."/>
            <person name="Smith T.J."/>
            <person name="Spier E."/>
            <person name="Spradling A.C."/>
            <person name="Stapleton M."/>
            <person name="Strong R."/>
            <person name="Sun E."/>
            <person name="Svirskas R."/>
            <person name="Tector C."/>
            <person name="Turner R."/>
            <person name="Venter E."/>
            <person name="Wang A.H."/>
            <person name="Wang X."/>
            <person name="Wang Z.-Y."/>
            <person name="Wassarman D.A."/>
            <person name="Weinstock G.M."/>
            <person name="Weissenbach J."/>
            <person name="Williams S.M."/>
            <person name="Woodage T."/>
            <person name="Worley K.C."/>
            <person name="Wu D."/>
            <person name="Yang S."/>
            <person name="Yao Q.A."/>
            <person name="Ye J."/>
            <person name="Yeh R.-F."/>
            <person name="Zaveri J.S."/>
            <person name="Zhan M."/>
            <person name="Zhang G."/>
            <person name="Zhao Q."/>
            <person name="Zheng L."/>
            <person name="Zheng X.H."/>
            <person name="Zhong F.N."/>
            <person name="Zhong W."/>
            <person name="Zhou X."/>
            <person name="Zhu S.C."/>
            <person name="Zhu X."/>
            <person name="Smith H.O."/>
            <person name="Gibbs R.A."/>
            <person name="Myers E.W."/>
            <person name="Rubin G.M."/>
            <person name="Venter J.C."/>
        </authorList>
    </citation>
    <scope>NUCLEOTIDE SEQUENCE [LARGE SCALE GENOMIC DNA]</scope>
    <source>
        <strain>Berkeley</strain>
    </source>
</reference>
<reference key="4">
    <citation type="journal article" date="2002" name="Genome Biol.">
        <title>Annotation of the Drosophila melanogaster euchromatic genome: a systematic review.</title>
        <authorList>
            <person name="Misra S."/>
            <person name="Crosby M.A."/>
            <person name="Mungall C.J."/>
            <person name="Matthews B.B."/>
            <person name="Campbell K.S."/>
            <person name="Hradecky P."/>
            <person name="Huang Y."/>
            <person name="Kaminker J.S."/>
            <person name="Millburn G.H."/>
            <person name="Prochnik S.E."/>
            <person name="Smith C.D."/>
            <person name="Tupy J.L."/>
            <person name="Whitfield E.J."/>
            <person name="Bayraktaroglu L."/>
            <person name="Berman B.P."/>
            <person name="Bettencourt B.R."/>
            <person name="Celniker S.E."/>
            <person name="de Grey A.D.N.J."/>
            <person name="Drysdale R.A."/>
            <person name="Harris N.L."/>
            <person name="Richter J."/>
            <person name="Russo S."/>
            <person name="Schroeder A.J."/>
            <person name="Shu S.Q."/>
            <person name="Stapleton M."/>
            <person name="Yamada C."/>
            <person name="Ashburner M."/>
            <person name="Gelbart W.M."/>
            <person name="Rubin G.M."/>
            <person name="Lewis S.E."/>
        </authorList>
    </citation>
    <scope>GENOME REANNOTATION</scope>
    <source>
        <strain>Berkeley</strain>
    </source>
</reference>
<reference key="5">
    <citation type="submission" date="2003-12" db="EMBL/GenBank/DDBJ databases">
        <authorList>
            <person name="Stapleton M."/>
            <person name="Brokstein P."/>
            <person name="Hong L."/>
            <person name="Agbayani A."/>
            <person name="Carlson J."/>
            <person name="Champe M."/>
            <person name="Chavez C."/>
            <person name="Dorsett V."/>
            <person name="Dresnek D."/>
            <person name="Farfan D."/>
            <person name="Frise E."/>
            <person name="George R."/>
            <person name="Gonzalez M."/>
            <person name="Guarin H."/>
            <person name="Kronmiller B."/>
            <person name="Li P."/>
            <person name="Liao G."/>
            <person name="Miranda A."/>
            <person name="Mungall C.J."/>
            <person name="Nunoo J."/>
            <person name="Pacleb J."/>
            <person name="Paragas V."/>
            <person name="Park S."/>
            <person name="Patel S."/>
            <person name="Phouanenavong S."/>
            <person name="Wan K."/>
            <person name="Yu C."/>
            <person name="Lewis S.E."/>
            <person name="Rubin G.M."/>
            <person name="Celniker S."/>
        </authorList>
    </citation>
    <scope>NUCLEOTIDE SEQUENCE [MRNA]</scope>
</reference>
<reference key="6">
    <citation type="submission" date="2009-03" db="EMBL/GenBank/DDBJ databases">
        <authorList>
            <person name="Carlson J."/>
            <person name="Booth B."/>
            <person name="Frise E."/>
            <person name="Park S."/>
            <person name="Wan K."/>
            <person name="Yu C."/>
            <person name="Celniker S."/>
        </authorList>
    </citation>
    <scope>NUCLEOTIDE SEQUENCE [MRNA]</scope>
</reference>
<reference key="7">
    <citation type="submission" date="2012-09" db="EMBL/GenBank/DDBJ databases">
        <title>Variability in the piRNA pathway induces a variable load of transposable elements in wild type strains of Drosophila simulans.</title>
        <authorList>
            <person name="Fablet M."/>
            <person name="Akkouche A."/>
            <person name="Braman V."/>
            <person name="Vieira C."/>
        </authorList>
    </citation>
    <scope>NUCLEOTIDE SEQUENCE [MRNA]</scope>
</reference>
<reference key="8">
    <citation type="journal article" date="1997" name="Development">
        <title>A novel group of pumilio mutations affects the asymmetric division of germline stem cells in the Drosophila ovary.</title>
        <authorList>
            <person name="Lin H."/>
            <person name="Spradling A.C."/>
        </authorList>
    </citation>
    <scope>FUNCTION</scope>
    <scope>TISSUE SPECIFICITY</scope>
    <scope>DISRUPTION PHENOTYPE</scope>
</reference>
<reference key="9">
    <citation type="journal article" date="2000" name="Development">
        <title>piwi encodes a nucleoplasmic factor whose activity modulates the number and division rate of germline stem cells.</title>
        <authorList>
            <person name="Cox D.N."/>
            <person name="Chao A."/>
            <person name="Lin H."/>
        </authorList>
    </citation>
    <scope>FUNCTION</scope>
    <scope>SUBCELLULAR LOCATION</scope>
    <scope>TISSUE SPECIFICITY</scope>
</reference>
<reference key="10">
    <citation type="journal article" date="2005" name="Nucleic Acids Res.">
        <title>Argonaute protein PIWI controls mobilization of retrotransposons in the Drosophila male germline.</title>
        <authorList>
            <person name="Kalmykova A.I."/>
            <person name="Klenov M.S."/>
            <person name="Gvozdev V.A."/>
        </authorList>
    </citation>
    <scope>FUNCTION</scope>
    <scope>TISSUE SPECIFICITY</scope>
</reference>
<reference key="11">
    <citation type="journal article" date="2006" name="Curr. Biol.">
        <title>The role of PIWI and the miRNA machinery in Drosophila germline determination.</title>
        <authorList>
            <person name="Megosh H.B."/>
            <person name="Cox D.N."/>
            <person name="Campbell C."/>
            <person name="Lin H."/>
        </authorList>
    </citation>
    <scope>FUNCTION</scope>
    <scope>INTERACTION WITH VAS; DCR-1 AND FMR1</scope>
    <scope>SUBCELLULAR LOCATION</scope>
    <scope>TISSUE SPECIFICITY</scope>
</reference>
<reference key="12">
    <citation type="journal article" date="2006" name="Genes Dev.">
        <title>Specific association of Piwi with rasiRNAs derived from retrotransposon and heterochromatic regions in the Drosophila genome.</title>
        <authorList>
            <person name="Saito K."/>
            <person name="Nishida K.M."/>
            <person name="Mori T."/>
            <person name="Kawamura Y."/>
            <person name="Miyoshi K."/>
            <person name="Nagami T."/>
            <person name="Siomi H."/>
            <person name="Siomi M.C."/>
        </authorList>
    </citation>
    <scope>FUNCTION</scope>
    <scope>RNA-BINDING</scope>
    <scope>TISSUE SPECIFICITY</scope>
    <scope>DEVELOPMENTAL STAGE</scope>
</reference>
<reference key="13">
    <citation type="journal article" date="2007" name="Cell">
        <title>Discrete small RNA-generating loci as master regulators of transposon activity in Drosophila.</title>
        <authorList>
            <person name="Brennecke J."/>
            <person name="Aravin A.A."/>
            <person name="Stark A."/>
            <person name="Dus M."/>
            <person name="Kellis M."/>
            <person name="Sachidanandam R."/>
            <person name="Hannon G.J."/>
        </authorList>
    </citation>
    <scope>FUNCTION</scope>
    <scope>RNA-BINDING</scope>
    <scope>SUBCELLULAR LOCATION</scope>
    <scope>TISSUE SPECIFICITY</scope>
    <scope>DEVELOPMENTAL STAGE</scope>
</reference>
<reference key="14">
    <citation type="journal article" date="2007" name="Genes Dev.">
        <title>Drosophila PIWI associates with chromatin and interacts directly with HP1a.</title>
        <authorList>
            <person name="Brower-Toland B."/>
            <person name="Findley S.D."/>
            <person name="Jiang L."/>
            <person name="Liu L."/>
            <person name="Yin H."/>
            <person name="Dus M."/>
            <person name="Zhou P."/>
            <person name="Elgin S.C."/>
            <person name="Lin H."/>
        </authorList>
    </citation>
    <scope>FUNCTION</scope>
    <scope>INTERACTION WITH CBX5</scope>
    <scope>SUBCELLULAR LOCATION</scope>
    <scope>TISSUE SPECIFICITY</scope>
    <scope>DEVELOPMENTAL STAGE</scope>
    <scope>MUTAGENESIS OF VAL-30 AND VAL-130</scope>
</reference>
<reference key="15">
    <citation type="journal article" date="2007" name="Nature">
        <title>An epigenetic activation role of Piwi and a Piwi-associated piRNA in Drosophila melanogaster.</title>
        <authorList>
            <person name="Yin H."/>
            <person name="Lin H."/>
        </authorList>
    </citation>
    <scope>FUNCTION</scope>
    <scope>RNA-BINDING</scope>
</reference>
<reference key="16">
    <citation type="journal article" date="2009" name="Cell">
        <title>Collapse of germline piRNAs in the absence of Argonaute3 reveals somatic piRNAs in flies.</title>
        <authorList>
            <person name="Li C."/>
            <person name="Vagin V.V."/>
            <person name="Lee S."/>
            <person name="Xu J."/>
            <person name="Ma S."/>
            <person name="Xi H."/>
            <person name="Seitz H."/>
            <person name="Horwich M.D."/>
            <person name="Syrzycka M."/>
            <person name="Honda B.M."/>
            <person name="Kittler E.L."/>
            <person name="Zapp M.L."/>
            <person name="Klattenhoff C."/>
            <person name="Schulz N."/>
            <person name="Theurkauf W.E."/>
            <person name="Weng Z."/>
            <person name="Zamore P.D."/>
        </authorList>
    </citation>
    <scope>SUBCELLULAR LOCATION</scope>
</reference>
<reference key="17">
    <citation type="journal article" date="2009" name="Nature">
        <title>A regulatory circuit for piwi by the large Maf gene traffic jam in Drosophila.</title>
        <authorList>
            <person name="Saito K."/>
            <person name="Inagaki S."/>
            <person name="Mituyama T."/>
            <person name="Kawamura Y."/>
            <person name="Ono Y."/>
            <person name="Sakota E."/>
            <person name="Kotani H."/>
            <person name="Asai K."/>
            <person name="Siomi H."/>
            <person name="Siomi M.C."/>
        </authorList>
    </citation>
    <scope>RNA-BINDING</scope>
    <scope>SUBCELLULAR LOCATION</scope>
    <scope>MUTAGENESIS OF ASP-614 AND ASP-685</scope>
</reference>
<reference key="18">
    <citation type="journal article" date="2009" name="Nat. Cell Biol.">
        <title>Arginine methylation of Piwi proteins catalysed by dPRMT5 is required for Ago3 and Aub stability.</title>
        <authorList>
            <person name="Kirino Y."/>
            <person name="Kim N."/>
            <person name="de Planell-Saguer M."/>
            <person name="Khandros E."/>
            <person name="Chiorean S."/>
            <person name="Klein P.S."/>
            <person name="Rigoutsos I."/>
            <person name="Jongens T.A."/>
            <person name="Mourelatos Z."/>
        </authorList>
    </citation>
    <scope>RNA-BINDING</scope>
    <scope>SUBCELLULAR LOCATION</scope>
    <scope>TISSUE SPECIFICITY</scope>
    <scope>METHYLATION</scope>
</reference>
<reference key="19">
    <citation type="journal article" date="2010" name="Genes Dev.">
        <title>Roles for the Yb body components Armitage and Yb in primary piRNA biogenesis in Drosophila.</title>
        <authorList>
            <person name="Saito K."/>
            <person name="Ishizu H."/>
            <person name="Komai M."/>
            <person name="Kotani H."/>
            <person name="Kawamura Y."/>
            <person name="Nishida K.M."/>
            <person name="Siomi H."/>
            <person name="Siomi M.C."/>
        </authorList>
    </citation>
    <scope>FUNCTION</scope>
    <scope>INTERACTION WITH ARMI AND FS(1)YB</scope>
    <scope>SUBCELLULAR LOCATION</scope>
    <scope>MUTAGENESIS OF ARG-54; THR-67 AND 327-TYR-TYR-328</scope>
</reference>
<reference key="20">
    <citation type="journal article" date="2011" name="Development">
        <title>PAPI, a novel TUDOR-domain protein, complexes with AGO3, ME31B and TRAL in the nuage to silence transposition.</title>
        <authorList>
            <person name="Liu L."/>
            <person name="Qi H."/>
            <person name="Wang J."/>
            <person name="Lin H."/>
        </authorList>
    </citation>
    <scope>INTERACTION WITH PAPI</scope>
    <scope>SUBCELLULAR LOCATION</scope>
    <scope>MUTAGENESIS OF 7-ARG--ARG-9</scope>
</reference>
<reference key="21">
    <citation type="journal article" date="2011" name="Development">
        <title>Vreteno, a gonad-specific protein, is essential for germline development and primary piRNA biogenesis in Drosophila.</title>
        <authorList>
            <person name="Zamparini A.L."/>
            <person name="Davis M.Y."/>
            <person name="Malone C.D."/>
            <person name="Vieira E."/>
            <person name="Zavadil J."/>
            <person name="Sachidanandam R."/>
            <person name="Hannon G.J."/>
            <person name="Lehmann R."/>
        </authorList>
    </citation>
    <scope>INTERACTION WITH VRET</scope>
</reference>
<reference key="22">
    <citation type="journal article" date="2011" name="Nat. Genet.">
        <title>Drosophila Piwi functions in Hsp90-mediated suppression of phenotypic variation.</title>
        <authorList>
            <person name="Gangaraju V.K."/>
            <person name="Yin H."/>
            <person name="Weiner M.M."/>
            <person name="Wang J."/>
            <person name="Huang X.A."/>
            <person name="Lin H."/>
        </authorList>
    </citation>
    <scope>IDENTIFICATION BY MASS SPECTROMETRY</scope>
    <scope>FUNCTION</scope>
    <scope>INTERACTION WITH HOP AND HSP83</scope>
    <scope>PHOSPHORYLATION</scope>
</reference>
<reference key="23">
    <citation type="journal article" date="2011" name="Proc. Natl. Acad. Sci. U.S.A.">
        <title>Separation of stem cell maintenance and transposon silencing functions of Piwi protein.</title>
        <authorList>
            <person name="Klenov M.S."/>
            <person name="Sokolova O.A."/>
            <person name="Yakushev E.Y."/>
            <person name="Stolyarenko A.D."/>
            <person name="Mikhaleva E.A."/>
            <person name="Lavrov S.A."/>
            <person name="Gvozdev V.A."/>
        </authorList>
    </citation>
    <scope>FUNCTION</scope>
    <scope>SUBCELLULAR LOCATION</scope>
</reference>
<reference key="24">
    <citation type="journal article" date="2012" name="Cell">
        <title>Transcriptional silencing of transposons by Piwi and maelstrom and its impact on chromatin state and gene expression.</title>
        <authorList>
            <person name="Sienski G."/>
            <person name="Donertas D."/>
            <person name="Brennecke J."/>
        </authorList>
    </citation>
    <scope>FUNCTION</scope>
    <scope>SUBCELLULAR LOCATION</scope>
    <scope>MUTAGENESIS OF 4-ASP--PRO-12; ASP-614 AND ASP-685</scope>
</reference>
<reference key="25">
    <citation type="journal article" date="2013" name="Dev. Cell">
        <title>A major epigenetic programming mechanism guided by piRNAs.</title>
        <authorList>
            <person name="Huang X.A."/>
            <person name="Yin H."/>
            <person name="Sweeney S."/>
            <person name="Raha D."/>
            <person name="Snyder M."/>
            <person name="Lin H."/>
        </authorList>
    </citation>
    <scope>FUNCTION</scope>
</reference>
<reference key="26">
    <citation type="journal article" date="2013" name="Genes Dev.">
        <title>Piwi induces piRNA-guided transcriptional silencing and establishment of a repressive chromatin state.</title>
        <authorList>
            <person name="Le Thomas A."/>
            <person name="Rogers A.K."/>
            <person name="Webster A."/>
            <person name="Marinov G.K."/>
            <person name="Liao S.E."/>
            <person name="Perkins E.M."/>
            <person name="Hur J.K."/>
            <person name="Aravin A.A."/>
            <person name="Toth K.F."/>
        </authorList>
    </citation>
    <scope>FUNCTION</scope>
    <scope>SUBCELLULAR LOCATION</scope>
    <scope>MUTAGENESIS OF 551-TYR--LYS-555</scope>
</reference>
<reference key="27">
    <citation type="journal article" date="2013" name="Genes Dev.">
        <title>Multiple roles for Piwi in silencing Drosophila transposons.</title>
        <authorList>
            <person name="Rozhkov N.V."/>
            <person name="Hammell M."/>
            <person name="Hannon G.J."/>
        </authorList>
    </citation>
    <scope>FUNCTION</scope>
</reference>
<reference key="28">
    <citation type="journal article" date="2013" name="Genes Dev.">
        <title>DmGTSF1 is necessary for Piwi-piRISC-mediated transcriptional transposon silencing in the Drosophila ovary.</title>
        <authorList>
            <person name="Ohtani H."/>
            <person name="Iwasaki Y.W."/>
            <person name="Shibuya A."/>
            <person name="Siomi H."/>
            <person name="Siomi M.C."/>
            <person name="Saito K."/>
        </authorList>
    </citation>
    <scope>INTERACTION WITH ARX</scope>
</reference>
<reference key="29">
    <citation type="journal article" date="2013" name="Genes Dev.">
        <title>Drosophila Gtsf1 is an essential component of the Piwi-mediated transcriptional silencing complex.</title>
        <authorList>
            <person name="Doenertas D."/>
            <person name="Sienski G."/>
            <person name="Brennecke J."/>
        </authorList>
    </citation>
    <scope>INTERACTION WITH ARX</scope>
    <scope>IDENTIFICATION BY MASS SPECTROMETRY</scope>
</reference>
<reference key="30">
    <citation type="journal article" date="2013" name="Proc. Natl. Acad. Sci. U.S.A.">
        <title>Function of Piwi, a nuclear Piwi/Argonaute protein, is independent of its slicer activity.</title>
        <authorList>
            <person name="Darricarrere N."/>
            <person name="Liu N."/>
            <person name="Watanabe T."/>
            <person name="Lin H."/>
        </authorList>
    </citation>
    <scope>FUNCTION</scope>
    <scope>SUBCELLULAR LOCATION</scope>
    <scope>TISSUE SPECIFICITY</scope>
    <scope>MUTAGENESIS OF ASP-614 AND ASP-685</scope>
</reference>
<reference key="31">
    <citation type="journal article" date="2014" name="Cell">
        <title>The rhino-deadlock-cutoff complex licenses noncanonical transcription of dual-strand piRNA clusters in Drosophila.</title>
        <authorList>
            <person name="Mohn F."/>
            <person name="Sienski G."/>
            <person name="Handler D."/>
            <person name="Brennecke J."/>
        </authorList>
    </citation>
    <scope>FUNCTION</scope>
</reference>
<reference key="32">
    <citation type="journal article" date="2015" name="Mol. Cell">
        <title>Krimper Enforces an Antisense Bias on piRNA Pools by Binding AGO3 in the Drosophila Germline.</title>
        <authorList>
            <person name="Sato K."/>
            <person name="Iwasaki Y.W."/>
            <person name="Shibuya A."/>
            <person name="Carninci P."/>
            <person name="Tsuchizawa Y."/>
            <person name="Ishizu H."/>
            <person name="Siomi M.C."/>
            <person name="Siomi H."/>
        </authorList>
    </citation>
    <scope>METHYLATION</scope>
</reference>
<reference key="33">
    <citation type="journal article" date="2015" name="Science">
        <title>Panoramix enforces piRNA-dependent cotranscriptional silencing.</title>
        <authorList>
            <person name="Yu Y."/>
            <person name="Gu J."/>
            <person name="Jin Y."/>
            <person name="Luo Y."/>
            <person name="Preall J.B."/>
            <person name="Ma J."/>
            <person name="Czech B."/>
            <person name="Hannon G.J."/>
        </authorList>
    </citation>
    <scope>INTERACTION WITH PANX</scope>
</reference>
<reference key="34">
    <citation type="journal article" date="2015" name="Genes Dev.">
        <title>Silencio/CG9754 connects the Piwi-piRNA complex to the cellular heterochromatin machinery.</title>
        <authorList>
            <person name="Sienski G."/>
            <person name="Batki J."/>
            <person name="Senti K.A."/>
            <person name="Doenertas D."/>
            <person name="Tirian L."/>
            <person name="Meixner K."/>
            <person name="Brennecke J."/>
        </authorList>
    </citation>
    <scope>INTERACTION WITH PANX</scope>
</reference>
<reference key="35">
    <citation type="journal article" date="2016" name="PLoS Genet.">
        <title>Tudor-SN Interacts with Piwi Antagonistically in Regulating Spermatogenesis but Synergistically in Silencing Transposons in Drosophila.</title>
        <authorList>
            <person name="Ku H.Y."/>
            <person name="Gangaraju V.K."/>
            <person name="Qi H."/>
            <person name="Liu N."/>
            <person name="Lin H."/>
        </authorList>
    </citation>
    <scope>FUNCTION</scope>
    <scope>INTERACTION WITH TUDOR-SN</scope>
    <scope>SUBCELLULAR LOCATION</scope>
    <scope>TISSUE SPECIFICITY</scope>
    <scope>DEVELOPMENTAL STAGE</scope>
    <scope>DISRUPTION PHENOTYPE</scope>
</reference>
<reference key="36">
    <citation type="journal article" date="2017" name="Nucleic Acids Res.">
        <title>Piwi interacts with chromatin at nuclear pores and promiscuously binds nuclear transcripts in Drosophila ovarian somatic cells.</title>
        <authorList>
            <person name="Ilyin A.A."/>
            <person name="Ryazansky S.S."/>
            <person name="Doronin S.A."/>
            <person name="Olenkina O.M."/>
            <person name="Mikhaleva E.A."/>
            <person name="Yakushev E.Y."/>
            <person name="Abramov Y.A."/>
            <person name="Belyakin S.N."/>
            <person name="Ivankin A.V."/>
            <person name="Pindyurin A.V."/>
            <person name="Gvozdev V.A."/>
            <person name="Klenov M.S."/>
            <person name="Shevelyov Y.Y."/>
        </authorList>
    </citation>
    <scope>FUNCTION</scope>
    <scope>ASSOCIATION WITH NUCLEAR PORE COMPLEX</scope>
    <scope>INTERACTION WITH ELYS; THOC5 AND XMAS-2</scope>
    <scope>SUBCELLULAR LOCATION</scope>
    <scope>TISSUE SPECIFICITY</scope>
</reference>
<reference key="37">
    <citation type="journal article" date="2018" name="J. Biol. Chem.">
        <title>A critical role for nucleoporin 358 (Nup358) in transposon silencing and piRNA biogenesis in Drosophila.</title>
        <authorList>
            <person name="Parikh R.Y."/>
            <person name="Lin H."/>
            <person name="Gangaraju V.K."/>
        </authorList>
    </citation>
    <scope>INTERACTION WITH NUP358</scope>
    <scope>SUBCELLULAR LOCATION</scope>
    <scope>TISSUE SPECIFICITY</scope>
</reference>
<reference key="38">
    <citation type="journal article" date="2019" name="EMBO J.">
        <title>Nuclear RNA export factor variant initiates piRNA-guided co-transcriptional silencing.</title>
        <authorList>
            <person name="Murano K."/>
            <person name="Iwasaki Y.W."/>
            <person name="Ishizu H."/>
            <person name="Mashiko A."/>
            <person name="Shibuya A."/>
            <person name="Kondo S."/>
            <person name="Adachi S."/>
            <person name="Suzuki S."/>
            <person name="Saito K."/>
            <person name="Natsume T."/>
            <person name="Siomi M.C."/>
            <person name="Siomi H."/>
        </authorList>
    </citation>
    <scope>IDENTIFICATION BY MASS SPECTROMETRY</scope>
    <scope>FUNCTION</scope>
    <scope>IDENTIFICATION IN A COMPLEX WITH NXF2; PANX AND NXT1</scope>
    <scope>TISSUE SPECIFICITY</scope>
</reference>
<reference key="39">
    <citation type="journal article" date="2019" name="Nat. Struct. Mol. Biol.">
        <title>The nascent RNA binding complex SFiNX licenses piRNA-guided heterochromatin formation.</title>
        <authorList>
            <person name="Batki J."/>
            <person name="Schnabl J."/>
            <person name="Wang J."/>
            <person name="Handler D."/>
            <person name="Andreev V.I."/>
            <person name="Stieger C.E."/>
            <person name="Novatchkova M."/>
            <person name="Lampersberger L."/>
            <person name="Kauneckaite K."/>
            <person name="Xie W."/>
            <person name="Mechtler K."/>
            <person name="Patel D.J."/>
            <person name="Brennecke J."/>
        </authorList>
    </citation>
    <scope>IDENTIFICATION BY MASS SPECTROMETRY</scope>
    <scope>FUNCTION</scope>
    <scope>IDENTIFICATION IN A COMPLEX WITH NXF2; PANX AND NXT1</scope>
    <scope>SUBCELLULAR LOCATION</scope>
    <scope>TISSUE SPECIFICITY</scope>
</reference>
<reference key="40">
    <citation type="journal article" date="2018" name="Proc. Natl. Acad. Sci. U.S.A.">
        <title>Structural insights into the sequence-specific recognition of Piwi by Drosophila Papi.</title>
        <authorList>
            <person name="Zhang Y.H."/>
            <person name="Liu W.W."/>
            <person name="Li R.H."/>
            <person name="Gu J.Q."/>
            <person name="Wu P."/>
            <person name="Peng C."/>
            <person name="Ma J.B."/>
            <person name="Wu L.G."/>
            <person name="Yu Y."/>
            <person name="Huang Y."/>
        </authorList>
    </citation>
    <scope>X-RAY CRYSTALLOGRAPHY (1.55 ANGSTROMS) OF 4-12</scope>
    <scope>IDENTIFICATION BY MASS SPECTROMETRY</scope>
    <scope>INTERACTION WITH PAPI</scope>
    <scope>METHYLATION AT ARG-7; ARG-9; ARG-10 AND ARG-11</scope>
    <scope>MUTAGENESIS OF GLN-5; 7-ARG--ARG-11; ARG-7; GLY-8; ARG-9; ARG-10; ARG-11; PRO-12; 51-ARG--ARG-54 AND 61-ARG--ARG-62</scope>
</reference>
<gene>
    <name evidence="39" type="primary">piwi</name>
    <name evidence="39" type="ORF">CG6122</name>
</gene>
<feature type="chain" id="PRO_0000194067" description="Protein piwi">
    <location>
        <begin position="1"/>
        <end position="843"/>
    </location>
</feature>
<feature type="domain" description="PAZ" evidence="2">
    <location>
        <begin position="263"/>
        <end position="372"/>
    </location>
</feature>
<feature type="domain" description="Piwi" evidence="3">
    <location>
        <begin position="538"/>
        <end position="829"/>
    </location>
</feature>
<feature type="region of interest" description="Interaction with CBX5 and papi" evidence="10">
    <location>
        <begin position="1"/>
        <end position="257"/>
    </location>
</feature>
<feature type="region of interest" description="Disordered" evidence="4">
    <location>
        <begin position="1"/>
        <end position="76"/>
    </location>
</feature>
<feature type="short sequence motif" description="Nuclear localization signal">
    <location>
        <begin position="1"/>
        <end position="12"/>
    </location>
</feature>
<feature type="compositionally biased region" description="Basic and acidic residues" evidence="4">
    <location>
        <begin position="41"/>
        <end position="72"/>
    </location>
</feature>
<feature type="active site" evidence="1">
    <location>
        <position position="614"/>
    </location>
</feature>
<feature type="active site" evidence="1">
    <location>
        <position position="685"/>
    </location>
</feature>
<feature type="binding site" evidence="1">
    <location>
        <position position="589"/>
    </location>
    <ligand>
        <name>Mg(2+)</name>
        <dbReference type="ChEBI" id="CHEBI:18420"/>
    </ligand>
</feature>
<feature type="binding site" evidence="1">
    <location>
        <position position="843"/>
    </location>
    <ligand>
        <name>Mg(2+)</name>
        <dbReference type="ChEBI" id="CHEBI:18420"/>
    </ligand>
</feature>
<feature type="modified residue" description="Symmetric dimethylarginine" evidence="32">
    <location>
        <position position="7"/>
    </location>
</feature>
<feature type="modified residue" description="Symmetric dimethylarginine" evidence="32">
    <location>
        <position position="9"/>
    </location>
</feature>
<feature type="modified residue" description="Symmetric dimethylarginine" evidence="32">
    <location>
        <position position="10"/>
    </location>
</feature>
<feature type="modified residue" description="Symmetric dimethylarginine" evidence="32">
    <location>
        <position position="11"/>
    </location>
</feature>
<feature type="mutagenesis site" description="Largely prevents nuclear accumulation. Affects repression activity of soma- and germline-specific transposable elements and fertility." evidence="19">
    <location>
        <begin position="4"/>
        <end position="12"/>
    </location>
</feature>
<feature type="mutagenesis site" description="Reduced binding to papi." evidence="32">
    <original>Q</original>
    <variation>A</variation>
    <location>
        <position position="5"/>
    </location>
</feature>
<feature type="mutagenesis site" description="Abolishes binding to papi." evidence="32">
    <original>RGRRR</original>
    <variation>AGAAA</variation>
    <location>
        <begin position="7"/>
        <end position="11"/>
    </location>
</feature>
<feature type="mutagenesis site" description="Abolishes binding to papi." evidence="16">
    <original>RGR</original>
    <variation>KGK</variation>
    <location>
        <begin position="7"/>
        <end position="9"/>
    </location>
</feature>
<feature type="mutagenesis site" description="Large decrease in binding to papi." evidence="32">
    <original>R</original>
    <variation>A</variation>
    <location>
        <position position="7"/>
    </location>
</feature>
<feature type="mutagenesis site" description="Large decrease in binding to papi." evidence="32">
    <original>R</original>
    <variation>K</variation>
    <location>
        <position position="7"/>
    </location>
</feature>
<feature type="mutagenesis site" description="Highly significant decrease in binding to papi." evidence="32">
    <original>G</original>
    <variation>V</variation>
    <location>
        <position position="8"/>
    </location>
</feature>
<feature type="mutagenesis site" description="Decreased binding to papi." evidence="32">
    <original>R</original>
    <variation>A</variation>
    <location>
        <position position="9"/>
    </location>
</feature>
<feature type="mutagenesis site" description="Decreased binding to papi." evidence="32">
    <original>R</original>
    <variation>K</variation>
    <location>
        <position position="9"/>
    </location>
</feature>
<feature type="mutagenesis site" description="Abolishes binding to papi." evidence="32">
    <original>R</original>
    <variation>A</variation>
    <location>
        <position position="10"/>
    </location>
</feature>
<feature type="mutagenesis site" description="Abolishes binding to papi." evidence="32">
    <original>R</original>
    <variation>K</variation>
    <location>
        <position position="10"/>
    </location>
</feature>
<feature type="mutagenesis site" description="Decreased binding to papi." evidence="32">
    <original>R</original>
    <variation>A</variation>
    <location>
        <position position="11"/>
    </location>
</feature>
<feature type="mutagenesis site" description="Decreased binding to papi." evidence="32">
    <original>R</original>
    <variation>K</variation>
    <location>
        <position position="11"/>
    </location>
</feature>
<feature type="mutagenesis site" description="No significant effect on binding to papi." evidence="32">
    <original>P</original>
    <variation>A</variation>
    <location>
        <position position="12"/>
    </location>
</feature>
<feature type="mutagenesis site" description="Abolishes binding to CBX5; when associated with or without A-130. Fails to rescue dominant defects in white reporter silencing produced by the piwi2 mutation." evidence="10">
    <original>V</original>
    <variation>A</variation>
    <location>
        <position position="30"/>
    </location>
</feature>
<feature type="mutagenesis site" description="No effect on binding to papi." evidence="32">
    <original>RERR</original>
    <variation>AEAA</variation>
    <location>
        <begin position="51"/>
        <end position="54"/>
    </location>
</feature>
<feature type="mutagenesis site" description="Confers RNAi insensitivity; when associated with P-67." evidence="14">
    <original>R</original>
    <variation>G</variation>
    <location>
        <position position="54"/>
    </location>
</feature>
<feature type="mutagenesis site" description="No effect on binding to papi." evidence="32">
    <original>RR</original>
    <variation>AA</variation>
    <location>
        <begin position="61"/>
        <end position="62"/>
    </location>
</feature>
<feature type="mutagenesis site" description="Confers RNAi insensitivity; when associated with G-54." evidence="14">
    <original>T</original>
    <variation>P</variation>
    <location>
        <position position="67"/>
    </location>
</feature>
<feature type="mutagenesis site" description="Abolishes binding to CBX5; when associated with A-30." evidence="10">
    <original>V</original>
    <variation>A</variation>
    <location>
        <position position="130"/>
    </location>
</feature>
<feature type="mutagenesis site" description="Promotes accumulation in the cytoplasm." evidence="14">
    <original>YY</original>
    <variation>AA</variation>
    <location>
        <begin position="327"/>
        <end position="328"/>
    </location>
</feature>
<feature type="mutagenesis site" description="Abolishes binding to piRNAs. Reduces localization to the nucleus. Does not affect chromatin binding. Affects fertility and ovary morphology." evidence="22">
    <original>YSSIK</original>
    <variation>LSSIE</variation>
    <location>
        <begin position="551"/>
        <end position="555"/>
    </location>
</feature>
<feature type="mutagenesis site" description="Does not affect nuclear localization, repression activity of soma- and germline-specific transposable elements, fertility and piRNA loading; when associated with or without A-685." evidence="13 19 20">
    <original>D</original>
    <variation>A</variation>
    <location>
        <position position="614"/>
    </location>
</feature>
<feature type="mutagenesis site" description="Does not affect nuclear localization, repression activity of soma- and germline-specific transposable elements, fertility and piRNA loading; when associated with or without A-614." evidence="13 19 20">
    <original>D</original>
    <variation>A</variation>
    <location>
        <position position="685"/>
    </location>
</feature>
<feature type="sequence conflict" description="In Ref. 7; AFX62841/AFX62842." evidence="38" ref="7">
    <original>F</original>
    <variation>S</variation>
    <location>
        <position position="33"/>
    </location>
</feature>
<feature type="sequence conflict" description="In Ref. 2; AGA18878/AGA18879/AGA18881/AGA18882/AGA18883/AGA18884, 5; AAR82805 and 7; AFX62837/AFX62838/AFX62839/AFX62841/AFX62842." evidence="38" ref="2 5 7">
    <original>R</original>
    <variation>G</variation>
    <location>
        <position position="54"/>
    </location>
</feature>
<feature type="sequence conflict" description="In Ref. 1; AAD08704, 2; AGA18878/AGA18879/AGA18880/AGA18881/AGA18882/AGA18883/AGA18884, 5; AAR82805 and 7; AFX62837/AFX62838/AFX62839/AFX62841/AFX62842." evidence="38" ref="1 2 5 7">
    <original>T</original>
    <variation>P</variation>
    <location>
        <position position="67"/>
    </location>
</feature>
<feature type="sequence conflict" description="In Ref. 2; AGA18882/AGA18883 and 5; AAR82805." evidence="38" ref="2 5">
    <original>N</original>
    <variation>D</variation>
    <location>
        <position position="80"/>
    </location>
</feature>
<feature type="sequence conflict" description="In Ref. 1; AAD08704, 2; AGA18878/AGA18879/AGA18880/AGA18881/AGA18882/AGA18883/AGA18884, 5; AAR82805 and 7; AFX62837/AFX62838/AFX62839/AFX62841/AFX62842." evidence="38" ref="1 2 5 7">
    <original>A</original>
    <variation>V</variation>
    <location>
        <position position="84"/>
    </location>
</feature>
<feature type="sequence conflict" description="In Ref. 1; AAD08704, 2; AGA18880/AGA18881/AGA18882/AGA18883 and 5; AAR82805." evidence="38" ref="1 2 5">
    <original>EPS</original>
    <variation>VPT</variation>
    <location>
        <begin position="122"/>
        <end position="124"/>
    </location>
</feature>
<feature type="sequence conflict" description="In Ref. 2; AGA18884." evidence="38" ref="2">
    <original>F</original>
    <variation>I</variation>
    <location>
        <position position="182"/>
    </location>
</feature>
<feature type="sequence conflict" description="In Ref. 7; AFX62841." evidence="38" ref="7">
    <original>F</original>
    <variation>L</variation>
    <location>
        <position position="193"/>
    </location>
</feature>
<feature type="sequence conflict" description="In Ref. 7; AFX62841." evidence="38" ref="7">
    <original>I</original>
    <variation>V</variation>
    <location>
        <position position="226"/>
    </location>
</feature>
<feature type="sequence conflict" description="In Ref. 7; AFX62842." evidence="38" ref="7">
    <original>S</original>
    <variation>L</variation>
    <location>
        <position position="240"/>
    </location>
</feature>
<feature type="sequence conflict" description="In Ref. 5; AAR82805." evidence="38" ref="5">
    <original>V</original>
    <variation>L</variation>
    <location>
        <position position="325"/>
    </location>
</feature>
<feature type="sequence conflict" description="In Ref. 7; AFX62837/AFX62838." evidence="38" ref="7">
    <original>I</original>
    <variation>V</variation>
    <location>
        <position position="364"/>
    </location>
</feature>
<feature type="sequence conflict" description="In Ref. 7; AFX62837/AFX62838." evidence="38" ref="7">
    <original>S</original>
    <variation>P</variation>
    <location>
        <position position="496"/>
    </location>
</feature>
<feature type="sequence conflict" description="In Ref. 7; AFX62837/AFX62838." evidence="38" ref="7">
    <original>L</original>
    <variation>P</variation>
    <location>
        <position position="506"/>
    </location>
</feature>
<feature type="sequence conflict" description="In Ref. 7; AFX62839." evidence="38" ref="7">
    <original>K</original>
    <variation>R</variation>
    <location>
        <position position="556"/>
    </location>
</feature>
<feature type="sequence conflict" description="In Ref. 1; AAD08705." evidence="38" ref="1">
    <original>NR</original>
    <variation>KPY</variation>
    <location>
        <begin position="576"/>
        <end position="577"/>
    </location>
</feature>
<feature type="sequence conflict" description="In Ref. 5; AAR82763." evidence="38" ref="5">
    <original>G</original>
    <variation>R</variation>
    <location>
        <position position="686"/>
    </location>
</feature>
<feature type="sequence conflict" description="In Ref. 7; AFX62839." evidence="38" ref="7">
    <original>R</original>
    <variation>G</variation>
    <location>
        <position position="728"/>
    </location>
</feature>
<feature type="sequence conflict" description="In Ref. 7; AFX62842." evidence="38" ref="7">
    <original>K</original>
    <variation>E</variation>
    <location>
        <position position="818"/>
    </location>
</feature>
<feature type="strand" evidence="41">
    <location>
        <begin position="7"/>
        <end position="9"/>
    </location>
</feature>
<feature type="strand" evidence="42">
    <location>
        <begin position="94"/>
        <end position="107"/>
    </location>
</feature>
<feature type="strand" evidence="42">
    <location>
        <begin position="115"/>
        <end position="123"/>
    </location>
</feature>
<feature type="helix" evidence="42">
    <location>
        <begin position="128"/>
        <end position="136"/>
    </location>
</feature>
<feature type="turn" evidence="42">
    <location>
        <begin position="139"/>
        <end position="142"/>
    </location>
</feature>
<feature type="strand" evidence="42">
    <location>
        <begin position="150"/>
        <end position="156"/>
    </location>
</feature>
<feature type="strand" evidence="42">
    <location>
        <begin position="160"/>
        <end position="168"/>
    </location>
</feature>
<feature type="turn" evidence="42">
    <location>
        <begin position="170"/>
        <end position="172"/>
    </location>
</feature>
<feature type="strand" evidence="42">
    <location>
        <begin position="175"/>
        <end position="185"/>
    </location>
</feature>
<feature type="helix" evidence="42">
    <location>
        <begin position="191"/>
        <end position="205"/>
    </location>
</feature>
<feature type="helix" evidence="42">
    <location>
        <begin position="206"/>
        <end position="208"/>
    </location>
</feature>
<feature type="strand" evidence="42">
    <location>
        <begin position="211"/>
        <end position="213"/>
    </location>
</feature>
<feature type="strand" evidence="42">
    <location>
        <begin position="216"/>
        <end position="218"/>
    </location>
</feature>
<feature type="helix" evidence="42">
    <location>
        <begin position="220"/>
        <end position="222"/>
    </location>
</feature>
<feature type="strand" evidence="42">
    <location>
        <begin position="224"/>
        <end position="226"/>
    </location>
</feature>
<feature type="turn" evidence="42">
    <location>
        <begin position="227"/>
        <end position="230"/>
    </location>
</feature>
<feature type="strand" evidence="42">
    <location>
        <begin position="231"/>
        <end position="243"/>
    </location>
</feature>
<feature type="strand" evidence="42">
    <location>
        <begin position="248"/>
        <end position="260"/>
    </location>
</feature>
<feature type="helix" evidence="42">
    <location>
        <begin position="264"/>
        <end position="271"/>
    </location>
</feature>
<feature type="helix" evidence="42">
    <location>
        <begin position="281"/>
        <end position="286"/>
    </location>
</feature>
<feature type="strand" evidence="42">
    <location>
        <begin position="290"/>
        <end position="293"/>
    </location>
</feature>
<feature type="strand" evidence="42">
    <location>
        <begin position="299"/>
        <end position="301"/>
    </location>
</feature>
<feature type="strand" evidence="42">
    <location>
        <begin position="304"/>
        <end position="306"/>
    </location>
</feature>
<feature type="strand" evidence="42">
    <location>
        <begin position="314"/>
        <end position="316"/>
    </location>
</feature>
<feature type="strand" evidence="42">
    <location>
        <begin position="321"/>
        <end position="323"/>
    </location>
</feature>
<feature type="helix" evidence="42">
    <location>
        <begin position="324"/>
        <end position="331"/>
    </location>
</feature>
<feature type="strand" evidence="42">
    <location>
        <begin position="343"/>
        <end position="345"/>
    </location>
</feature>
<feature type="helix" evidence="42">
    <location>
        <begin position="365"/>
        <end position="367"/>
    </location>
</feature>
<feature type="helix" evidence="42">
    <location>
        <begin position="381"/>
        <end position="391"/>
    </location>
</feature>
<feature type="helix" evidence="42">
    <location>
        <begin position="395"/>
        <end position="411"/>
    </location>
</feature>
<feature type="helix" evidence="42">
    <location>
        <begin position="413"/>
        <end position="421"/>
    </location>
</feature>
<feature type="strand" evidence="42">
    <location>
        <begin position="432"/>
        <end position="438"/>
    </location>
</feature>
<feature type="strand" evidence="42">
    <location>
        <begin position="442"/>
        <end position="444"/>
    </location>
</feature>
<feature type="strand" evidence="42">
    <location>
        <begin position="449"/>
        <end position="451"/>
    </location>
</feature>
<feature type="turn" evidence="42">
    <location>
        <begin position="453"/>
        <end position="456"/>
    </location>
</feature>
<feature type="turn" evidence="42">
    <location>
        <begin position="459"/>
        <end position="461"/>
    </location>
</feature>
<feature type="strand" evidence="42">
    <location>
        <begin position="479"/>
        <end position="483"/>
    </location>
</feature>
<feature type="helix" evidence="42">
    <location>
        <begin position="484"/>
        <end position="486"/>
    </location>
</feature>
<feature type="helix" evidence="42">
    <location>
        <begin position="487"/>
        <end position="504"/>
    </location>
</feature>
<feature type="strand" evidence="42">
    <location>
        <begin position="512"/>
        <end position="518"/>
    </location>
</feature>
<feature type="helix" evidence="42">
    <location>
        <begin position="521"/>
        <end position="532"/>
    </location>
</feature>
<feature type="strand" evidence="42">
    <location>
        <begin position="539"/>
        <end position="545"/>
    </location>
</feature>
<feature type="helix" evidence="42">
    <location>
        <begin position="548"/>
        <end position="559"/>
    </location>
</feature>
<feature type="strand" evidence="42">
    <location>
        <begin position="566"/>
        <end position="570"/>
    </location>
</feature>
<feature type="helix" evidence="42">
    <location>
        <begin position="571"/>
        <end position="574"/>
    </location>
</feature>
<feature type="helix" evidence="42">
    <location>
        <begin position="579"/>
        <end position="593"/>
    </location>
</feature>
<feature type="strand" evidence="42">
    <location>
        <begin position="606"/>
        <end position="617"/>
    </location>
</feature>
<feature type="strand" evidence="42">
    <location>
        <begin position="625"/>
        <end position="632"/>
    </location>
</feature>
<feature type="turn" evidence="42">
    <location>
        <begin position="634"/>
        <end position="637"/>
    </location>
</feature>
<feature type="strand" evidence="42">
    <location>
        <begin position="641"/>
        <end position="647"/>
    </location>
</feature>
<feature type="helix" evidence="42">
    <location>
        <begin position="658"/>
        <end position="673"/>
    </location>
</feature>
<feature type="strand" evidence="42">
    <location>
        <begin position="678"/>
        <end position="685"/>
    </location>
</feature>
<feature type="helix" evidence="42">
    <location>
        <begin position="692"/>
        <end position="713"/>
    </location>
</feature>
<feature type="strand" evidence="42">
    <location>
        <begin position="720"/>
        <end position="728"/>
    </location>
</feature>
<feature type="strand" evidence="42">
    <location>
        <begin position="734"/>
        <end position="736"/>
    </location>
</feature>
<feature type="strand" evidence="42">
    <location>
        <begin position="745"/>
        <end position="747"/>
    </location>
</feature>
<feature type="strand" evidence="42">
    <location>
        <begin position="749"/>
        <end position="752"/>
    </location>
</feature>
<feature type="strand" evidence="42">
    <location>
        <begin position="754"/>
        <end position="756"/>
    </location>
</feature>
<feature type="strand" evidence="42">
    <location>
        <begin position="758"/>
        <end position="762"/>
    </location>
</feature>
<feature type="strand" evidence="42">
    <location>
        <begin position="767"/>
        <end position="769"/>
    </location>
</feature>
<feature type="strand" evidence="42">
    <location>
        <begin position="774"/>
        <end position="781"/>
    </location>
</feature>
<feature type="helix" evidence="42">
    <location>
        <begin position="787"/>
        <end position="797"/>
    </location>
</feature>
<feature type="strand" evidence="42">
    <location>
        <begin position="804"/>
        <end position="806"/>
    </location>
</feature>
<feature type="helix" evidence="42">
    <location>
        <begin position="812"/>
        <end position="826"/>
    </location>
</feature>
<feature type="helix" evidence="42">
    <location>
        <begin position="834"/>
        <end position="836"/>
    </location>
</feature>
<accession>Q9VKM1</accession>
<accession>C0PTU6</accession>
<accession>K7WKS7</accession>
<accession>K7WKT2</accession>
<accession>K7WQ39</accession>
<accession>K7WS94</accession>
<accession>K7XHZ2</accession>
<accession>L0CPR8</accession>
<accession>L0CPS4</accession>
<accession>L0CQ04</accession>
<accession>L0CR36</accession>
<accession>L0CRH9</accession>
<accession>L0CRI5</accession>
<accession>L0CRU0</accession>
<accession>O96674</accession>
<accession>O96675</accession>
<accession>Q6NNZ4</accession>
<accession>Q6NP34</accession>
<dbReference type="EC" id="3.1.26.-" evidence="1"/>
<dbReference type="EMBL" id="AF104354">
    <property type="protein sequence ID" value="AAD08704.1"/>
    <property type="molecule type" value="mRNA"/>
</dbReference>
<dbReference type="EMBL" id="AF104355">
    <property type="protein sequence ID" value="AAD08705.1"/>
    <property type="molecule type" value="Genomic_DNA"/>
</dbReference>
<dbReference type="EMBL" id="KC116149">
    <property type="protein sequence ID" value="AGA18878.1"/>
    <property type="molecule type" value="Genomic_DNA"/>
</dbReference>
<dbReference type="EMBL" id="KC116150">
    <property type="protein sequence ID" value="AGA18879.1"/>
    <property type="molecule type" value="Genomic_DNA"/>
</dbReference>
<dbReference type="EMBL" id="KC116151">
    <property type="protein sequence ID" value="AGA18880.1"/>
    <property type="molecule type" value="Genomic_DNA"/>
</dbReference>
<dbReference type="EMBL" id="KC116152">
    <property type="protein sequence ID" value="AGA18881.1"/>
    <property type="molecule type" value="Genomic_DNA"/>
</dbReference>
<dbReference type="EMBL" id="KC116153">
    <property type="protein sequence ID" value="AGA18882.1"/>
    <property type="molecule type" value="Genomic_DNA"/>
</dbReference>
<dbReference type="EMBL" id="KC116154">
    <property type="protein sequence ID" value="AGA18883.1"/>
    <property type="molecule type" value="Genomic_DNA"/>
</dbReference>
<dbReference type="EMBL" id="KC116155">
    <property type="protein sequence ID" value="AGA18884.1"/>
    <property type="molecule type" value="Genomic_DNA"/>
</dbReference>
<dbReference type="EMBL" id="AE014134">
    <property type="protein sequence ID" value="AAF53043.1"/>
    <property type="molecule type" value="Genomic_DNA"/>
</dbReference>
<dbReference type="EMBL" id="BT011097">
    <property type="protein sequence ID" value="AAR82763.1"/>
    <property type="status" value="ALT_INIT"/>
    <property type="molecule type" value="mRNA"/>
</dbReference>
<dbReference type="EMBL" id="BT011138">
    <property type="protein sequence ID" value="AAR82805.1"/>
    <property type="status" value="ALT_INIT"/>
    <property type="molecule type" value="mRNA"/>
</dbReference>
<dbReference type="EMBL" id="BT071791">
    <property type="protein sequence ID" value="ACN43727.1"/>
    <property type="status" value="ALT_INIT"/>
    <property type="molecule type" value="mRNA"/>
</dbReference>
<dbReference type="EMBL" id="JX656897">
    <property type="protein sequence ID" value="AFX62837.1"/>
    <property type="molecule type" value="mRNA"/>
</dbReference>
<dbReference type="EMBL" id="JX656898">
    <property type="protein sequence ID" value="AFX62838.1"/>
    <property type="molecule type" value="mRNA"/>
</dbReference>
<dbReference type="EMBL" id="JX656899">
    <property type="protein sequence ID" value="AFX62839.1"/>
    <property type="molecule type" value="mRNA"/>
</dbReference>
<dbReference type="EMBL" id="JX656901">
    <property type="protein sequence ID" value="AFX62841.1"/>
    <property type="molecule type" value="mRNA"/>
</dbReference>
<dbReference type="EMBL" id="JX656902">
    <property type="protein sequence ID" value="AFX62842.1"/>
    <property type="molecule type" value="mRNA"/>
</dbReference>
<dbReference type="RefSeq" id="NP_001285825.1">
    <property type="nucleotide sequence ID" value="NM_001298896.1"/>
</dbReference>
<dbReference type="RefSeq" id="NP_476875.1">
    <property type="nucleotide sequence ID" value="NM_057527.4"/>
</dbReference>
<dbReference type="PDB" id="5YGD">
    <property type="method" value="X-ray"/>
    <property type="resolution" value="1.55 A"/>
    <property type="chains" value="D=4-14"/>
</dbReference>
<dbReference type="PDB" id="5YGF">
    <property type="method" value="X-ray"/>
    <property type="resolution" value="1.70 A"/>
    <property type="chains" value="D=4-12"/>
</dbReference>
<dbReference type="PDB" id="6KR6">
    <property type="method" value="X-ray"/>
    <property type="resolution" value="2.90 A"/>
    <property type="chains" value="A=34-843"/>
</dbReference>
<dbReference type="PDBsum" id="5YGD"/>
<dbReference type="PDBsum" id="5YGF"/>
<dbReference type="PDBsum" id="6KR6"/>
<dbReference type="SMR" id="Q9VKM1"/>
<dbReference type="BioGRID" id="60588">
    <property type="interactions" value="58"/>
</dbReference>
<dbReference type="DIP" id="DIP-61694N"/>
<dbReference type="FunCoup" id="Q9VKM1">
    <property type="interactions" value="45"/>
</dbReference>
<dbReference type="IntAct" id="Q9VKM1">
    <property type="interactions" value="25"/>
</dbReference>
<dbReference type="MINT" id="Q9VKM1"/>
<dbReference type="STRING" id="7227.FBpp0079755"/>
<dbReference type="PaxDb" id="7227-FBpp0079755"/>
<dbReference type="EnsemblMetazoa" id="FBtr0080166">
    <property type="protein sequence ID" value="FBpp0079755"/>
    <property type="gene ID" value="FBgn0004872"/>
</dbReference>
<dbReference type="EnsemblMetazoa" id="FBtr0340227">
    <property type="protein sequence ID" value="FBpp0309202"/>
    <property type="gene ID" value="FBgn0004872"/>
</dbReference>
<dbReference type="GeneID" id="34521"/>
<dbReference type="KEGG" id="dme:Dmel_CG6122"/>
<dbReference type="AGR" id="FB:FBgn0004872"/>
<dbReference type="CTD" id="34521"/>
<dbReference type="FlyBase" id="FBgn0004872">
    <property type="gene designation" value="piwi"/>
</dbReference>
<dbReference type="VEuPathDB" id="VectorBase:FBgn0004872"/>
<dbReference type="eggNOG" id="KOG1042">
    <property type="taxonomic scope" value="Eukaryota"/>
</dbReference>
<dbReference type="HOGENOM" id="CLU_008813_0_0_1"/>
<dbReference type="InParanoid" id="Q9VKM1"/>
<dbReference type="OMA" id="IVHYHVD"/>
<dbReference type="OrthoDB" id="445936at2759"/>
<dbReference type="PhylomeDB" id="Q9VKM1"/>
<dbReference type="SignaLink" id="Q9VKM1"/>
<dbReference type="BioGRID-ORCS" id="34521">
    <property type="hits" value="0 hits in 3 CRISPR screens"/>
</dbReference>
<dbReference type="GenomeRNAi" id="34521"/>
<dbReference type="PRO" id="PR:Q9VKM1"/>
<dbReference type="Proteomes" id="UP000000803">
    <property type="component" value="Chromosome 2L"/>
</dbReference>
<dbReference type="Bgee" id="FBgn0004872">
    <property type="expression patterns" value="Expressed in cyst progenitor cell (Drosophila) in testis and 42 other cell types or tissues"/>
</dbReference>
<dbReference type="ExpressionAtlas" id="Q9VKM1">
    <property type="expression patterns" value="baseline and differential"/>
</dbReference>
<dbReference type="GO" id="GO:0000785">
    <property type="term" value="C:chromatin"/>
    <property type="evidence" value="ECO:0000314"/>
    <property type="project" value="FlyBase"/>
</dbReference>
<dbReference type="GO" id="GO:0010369">
    <property type="term" value="C:chromocenter"/>
    <property type="evidence" value="ECO:0000314"/>
    <property type="project" value="FlyBase"/>
</dbReference>
<dbReference type="GO" id="GO:0005737">
    <property type="term" value="C:cytoplasm"/>
    <property type="evidence" value="ECO:0000314"/>
    <property type="project" value="UniProtKB"/>
</dbReference>
<dbReference type="GO" id="GO:0005829">
    <property type="term" value="C:cytosol"/>
    <property type="evidence" value="ECO:0000314"/>
    <property type="project" value="FlyBase"/>
</dbReference>
<dbReference type="GO" id="GO:0000791">
    <property type="term" value="C:euchromatin"/>
    <property type="evidence" value="ECO:0000314"/>
    <property type="project" value="FlyBase"/>
</dbReference>
<dbReference type="GO" id="GO:0043073">
    <property type="term" value="C:germ cell nucleus"/>
    <property type="evidence" value="ECO:0000314"/>
    <property type="project" value="FlyBase"/>
</dbReference>
<dbReference type="GO" id="GO:0000792">
    <property type="term" value="C:heterochromatin"/>
    <property type="evidence" value="ECO:0000314"/>
    <property type="project" value="FlyBase"/>
</dbReference>
<dbReference type="GO" id="GO:0005654">
    <property type="term" value="C:nucleoplasm"/>
    <property type="evidence" value="ECO:0000314"/>
    <property type="project" value="UniProtKB"/>
</dbReference>
<dbReference type="GO" id="GO:0005634">
    <property type="term" value="C:nucleus"/>
    <property type="evidence" value="ECO:0000314"/>
    <property type="project" value="UniProtKB"/>
</dbReference>
<dbReference type="GO" id="GO:0043186">
    <property type="term" value="C:P granule"/>
    <property type="evidence" value="ECO:0000314"/>
    <property type="project" value="FlyBase"/>
</dbReference>
<dbReference type="GO" id="GO:0032991">
    <property type="term" value="C:protein-containing complex"/>
    <property type="evidence" value="ECO:0000314"/>
    <property type="project" value="UniProtKB"/>
</dbReference>
<dbReference type="GO" id="GO:0090571">
    <property type="term" value="C:RNA polymerase II transcription repressor complex"/>
    <property type="evidence" value="ECO:0000353"/>
    <property type="project" value="FlyBase"/>
</dbReference>
<dbReference type="GO" id="GO:0070725">
    <property type="term" value="C:Yb body"/>
    <property type="evidence" value="ECO:0000314"/>
    <property type="project" value="FlyBase"/>
</dbReference>
<dbReference type="GO" id="GO:0031490">
    <property type="term" value="F:chromatin DNA binding"/>
    <property type="evidence" value="ECO:0000314"/>
    <property type="project" value="UniProtKB"/>
</dbReference>
<dbReference type="GO" id="GO:0046872">
    <property type="term" value="F:metal ion binding"/>
    <property type="evidence" value="ECO:0007669"/>
    <property type="project" value="UniProtKB-KW"/>
</dbReference>
<dbReference type="GO" id="GO:0034584">
    <property type="term" value="F:piRNA binding"/>
    <property type="evidence" value="ECO:0000314"/>
    <property type="project" value="FlyBase"/>
</dbReference>
<dbReference type="GO" id="GO:0003723">
    <property type="term" value="F:RNA binding"/>
    <property type="evidence" value="ECO:0000314"/>
    <property type="project" value="UniProtKB"/>
</dbReference>
<dbReference type="GO" id="GO:0004521">
    <property type="term" value="F:RNA endonuclease activity"/>
    <property type="evidence" value="ECO:0000314"/>
    <property type="project" value="FlyBase"/>
</dbReference>
<dbReference type="GO" id="GO:0048132">
    <property type="term" value="P:female germ-line stem cell asymmetric division"/>
    <property type="evidence" value="ECO:0000315"/>
    <property type="project" value="UniProtKB"/>
</dbReference>
<dbReference type="GO" id="GO:0030718">
    <property type="term" value="P:germ-line stem cell population maintenance"/>
    <property type="evidence" value="ECO:0000314"/>
    <property type="project" value="UniProtKB"/>
</dbReference>
<dbReference type="GO" id="GO:0007294">
    <property type="term" value="P:germarium-derived oocyte fate determination"/>
    <property type="evidence" value="ECO:0000315"/>
    <property type="project" value="FlyBase"/>
</dbReference>
<dbReference type="GO" id="GO:0031507">
    <property type="term" value="P:heterochromatin formation"/>
    <property type="evidence" value="ECO:0000315"/>
    <property type="project" value="FlyBase"/>
</dbReference>
<dbReference type="GO" id="GO:0048133">
    <property type="term" value="P:male germ-line stem cell asymmetric division"/>
    <property type="evidence" value="ECO:0000315"/>
    <property type="project" value="UniProtKB"/>
</dbReference>
<dbReference type="GO" id="GO:0048477">
    <property type="term" value="P:oogenesis"/>
    <property type="evidence" value="ECO:0000315"/>
    <property type="project" value="UniProtKB"/>
</dbReference>
<dbReference type="GO" id="GO:0034587">
    <property type="term" value="P:piRNA processing"/>
    <property type="evidence" value="ECO:0000318"/>
    <property type="project" value="GO_Central"/>
</dbReference>
<dbReference type="GO" id="GO:0140991">
    <property type="term" value="P:piRNA-mediated gene silencing by mRNA destabilization"/>
    <property type="evidence" value="ECO:0000315"/>
    <property type="project" value="FlyBase"/>
</dbReference>
<dbReference type="GO" id="GO:0007279">
    <property type="term" value="P:pole cell formation"/>
    <property type="evidence" value="ECO:0000315"/>
    <property type="project" value="FlyBase"/>
</dbReference>
<dbReference type="GO" id="GO:0016441">
    <property type="term" value="P:post-transcriptional gene silencing"/>
    <property type="evidence" value="ECO:0000315"/>
    <property type="project" value="FlyBase"/>
</dbReference>
<dbReference type="GO" id="GO:0140990">
    <property type="term" value="P:primary piRNA processing"/>
    <property type="evidence" value="ECO:0000315"/>
    <property type="project" value="FlyBase"/>
</dbReference>
<dbReference type="GO" id="GO:0031047">
    <property type="term" value="P:regulatory ncRNA-mediated gene silencing"/>
    <property type="evidence" value="ECO:0000315"/>
    <property type="project" value="FlyBase"/>
</dbReference>
<dbReference type="GO" id="GO:0007283">
    <property type="term" value="P:spermatogenesis"/>
    <property type="evidence" value="ECO:0000315"/>
    <property type="project" value="UniProtKB"/>
</dbReference>
<dbReference type="GO" id="GO:0010526">
    <property type="term" value="P:transposable element silencing"/>
    <property type="evidence" value="ECO:0000315"/>
    <property type="project" value="FlyBase"/>
</dbReference>
<dbReference type="GO" id="GO:0141005">
    <property type="term" value="P:transposable element silencing by heterochromatin formation"/>
    <property type="evidence" value="ECO:0000315"/>
    <property type="project" value="FlyBase"/>
</dbReference>
<dbReference type="GO" id="GO:0141006">
    <property type="term" value="P:transposable element silencing by piRNA-mediated heterochromatin formation"/>
    <property type="evidence" value="ECO:0000315"/>
    <property type="project" value="FlyBase"/>
</dbReference>
<dbReference type="CDD" id="cd02845">
    <property type="entry name" value="PAZ_piwi_like"/>
    <property type="match status" value="1"/>
</dbReference>
<dbReference type="CDD" id="cd04658">
    <property type="entry name" value="Piwi_piwi-like_Euk"/>
    <property type="match status" value="1"/>
</dbReference>
<dbReference type="FunFam" id="3.40.50.2300:FF:000404">
    <property type="entry name" value="Argonaut-like protein"/>
    <property type="match status" value="1"/>
</dbReference>
<dbReference type="FunFam" id="2.170.260.10:FF:000003">
    <property type="entry name" value="Piwi-like RNA-mediated gene silencing 2"/>
    <property type="match status" value="1"/>
</dbReference>
<dbReference type="Gene3D" id="3.40.50.2300">
    <property type="match status" value="1"/>
</dbReference>
<dbReference type="Gene3D" id="2.170.260.10">
    <property type="entry name" value="paz domain"/>
    <property type="match status" value="1"/>
</dbReference>
<dbReference type="Gene3D" id="3.30.420.10">
    <property type="entry name" value="Ribonuclease H-like superfamily/Ribonuclease H"/>
    <property type="match status" value="1"/>
</dbReference>
<dbReference type="InterPro" id="IPR003100">
    <property type="entry name" value="PAZ_dom"/>
</dbReference>
<dbReference type="InterPro" id="IPR036085">
    <property type="entry name" value="PAZ_dom_sf"/>
</dbReference>
<dbReference type="InterPro" id="IPR003165">
    <property type="entry name" value="Piwi"/>
</dbReference>
<dbReference type="InterPro" id="IPR012337">
    <property type="entry name" value="RNaseH-like_sf"/>
</dbReference>
<dbReference type="InterPro" id="IPR036397">
    <property type="entry name" value="RNaseH_sf"/>
</dbReference>
<dbReference type="PANTHER" id="PTHR22891">
    <property type="entry name" value="EUKARYOTIC TRANSLATION INITIATION FACTOR 2C"/>
    <property type="match status" value="1"/>
</dbReference>
<dbReference type="Pfam" id="PF02170">
    <property type="entry name" value="PAZ"/>
    <property type="match status" value="1"/>
</dbReference>
<dbReference type="Pfam" id="PF02171">
    <property type="entry name" value="Piwi"/>
    <property type="match status" value="1"/>
</dbReference>
<dbReference type="Pfam" id="PF23278">
    <property type="entry name" value="Piwi_N"/>
    <property type="match status" value="1"/>
</dbReference>
<dbReference type="SMART" id="SM00949">
    <property type="entry name" value="PAZ"/>
    <property type="match status" value="1"/>
</dbReference>
<dbReference type="SMART" id="SM00950">
    <property type="entry name" value="Piwi"/>
    <property type="match status" value="1"/>
</dbReference>
<dbReference type="SUPFAM" id="SSF101690">
    <property type="entry name" value="PAZ domain"/>
    <property type="match status" value="1"/>
</dbReference>
<dbReference type="SUPFAM" id="SSF53098">
    <property type="entry name" value="Ribonuclease H-like"/>
    <property type="match status" value="1"/>
</dbReference>
<dbReference type="PROSITE" id="PS50821">
    <property type="entry name" value="PAZ"/>
    <property type="match status" value="1"/>
</dbReference>
<dbReference type="PROSITE" id="PS50822">
    <property type="entry name" value="PIWI"/>
    <property type="match status" value="1"/>
</dbReference>
<keyword id="KW-0002">3D-structure</keyword>
<keyword id="KW-0158">Chromosome</keyword>
<keyword id="KW-0963">Cytoplasm</keyword>
<keyword id="KW-0217">Developmental protein</keyword>
<keyword id="KW-0255">Endonuclease</keyword>
<keyword id="KW-0378">Hydrolase</keyword>
<keyword id="KW-0460">Magnesium</keyword>
<keyword id="KW-0479">Metal-binding</keyword>
<keyword id="KW-0488">Methylation</keyword>
<keyword id="KW-0540">Nuclease</keyword>
<keyword id="KW-0539">Nucleus</keyword>
<keyword id="KW-0597">Phosphoprotein</keyword>
<keyword id="KW-1185">Reference proteome</keyword>
<keyword id="KW-0694">RNA-binding</keyword>
<keyword id="KW-0943">RNA-mediated gene silencing</keyword>
<protein>
    <recommendedName>
        <fullName evidence="38">Protein piwi</fullName>
        <ecNumber evidence="1">3.1.26.-</ecNumber>
    </recommendedName>
    <alternativeName>
        <fullName evidence="39">Protein P-element induced wimpy testis</fullName>
    </alternativeName>
</protein>
<name>PIWI_DROME</name>
<sequence length="843" mass="97177">MADDQGRGRRRPLNEDDSSTSRGSGDGPRVKVFRGSSSGDPRADPRIEASRERRALEEAPRREGGPTERKPWGDQYDYLNTRPAELVSKKGTDGVPVMLQTNFFRLKTKPEWRIVHYHVEFEPSIENPRVRMGVLSNHANLLGSGYLFDGLQLFTTRKFEQEITVLSGKSKLDIEYKISIKFVGFISCAEPRFLQVLNLILRRSMKGLNLELVGRNLFDPRAKIEIREFKMELWPGYETSIRQHEKDILLGTEITHKVMRTETIYDIMRRCSHNPARHQDEVRVNVLDLIVLTDYNNRTYRINDVDFGQTPKSTFSCKGRDISFVEYYLTKYNIRIRDHNQPLLISKNRDKALKTNASELVVLIPELCRVTGLNAEMRSNFQLMRAMSSYTRMNPKQRTDRLRAFNHRLQNTPESVKVLRDWNMELDKNVTEVQGRIIGQQNIVFHNGKVPAGENADWQRHFRDQRMLTTPSDGLDRWAVIAPQRNSHELRTLLDSLYRAASGMGLRIRSPQEFIIYDDRTGTYVRAMDDCVRSDPKLILCLVPNDNAERYSSIKKRGYVDRAVPTQVVTLKTTKNRSLMSIATKIAIQLNCKLGYTPWMIELPLSGLMTIGFDIAKSTRDRKRAYGALIASMDLQQNSTYFSTVTECSAFDVLANTLWPMIAKALRQYQHEHRKLPSRIVFYRDGVSSGSLKQLFEFEVKDIIEKLKTEYARVQLSPPQLAYIVVTRSMNTRFFLNGQNPPPGTIVDDVITLPERYDFYLVSQQVRQGTVSPTSYNVLYSSMGLSPEKMQKLTYKMCHLYYNWSGTTRVPAVCQYAKKLATLVGTNLHSIPQNALEKKFYYL</sequence>
<evidence type="ECO:0000250" key="1">
    <source>
        <dbReference type="UniProtKB" id="A8D8P8"/>
    </source>
</evidence>
<evidence type="ECO:0000255" key="2">
    <source>
        <dbReference type="PROSITE-ProRule" id="PRU00142"/>
    </source>
</evidence>
<evidence type="ECO:0000255" key="3">
    <source>
        <dbReference type="PROSITE-ProRule" id="PRU00150"/>
    </source>
</evidence>
<evidence type="ECO:0000256" key="4">
    <source>
        <dbReference type="SAM" id="MobiDB-lite"/>
    </source>
</evidence>
<evidence type="ECO:0000269" key="5">
    <source>
    </source>
</evidence>
<evidence type="ECO:0000269" key="6">
    <source>
    </source>
</evidence>
<evidence type="ECO:0000269" key="7">
    <source>
    </source>
</evidence>
<evidence type="ECO:0000269" key="8">
    <source>
    </source>
</evidence>
<evidence type="ECO:0000269" key="9">
    <source>
    </source>
</evidence>
<evidence type="ECO:0000269" key="10">
    <source>
    </source>
</evidence>
<evidence type="ECO:0000269" key="11">
    <source>
    </source>
</evidence>
<evidence type="ECO:0000269" key="12">
    <source>
    </source>
</evidence>
<evidence type="ECO:0000269" key="13">
    <source>
    </source>
</evidence>
<evidence type="ECO:0000269" key="14">
    <source>
    </source>
</evidence>
<evidence type="ECO:0000269" key="15">
    <source>
    </source>
</evidence>
<evidence type="ECO:0000269" key="16">
    <source>
    </source>
</evidence>
<evidence type="ECO:0000269" key="17">
    <source>
    </source>
</evidence>
<evidence type="ECO:0000269" key="18">
    <source>
    </source>
</evidence>
<evidence type="ECO:0000269" key="19">
    <source>
    </source>
</evidence>
<evidence type="ECO:0000269" key="20">
    <source>
    </source>
</evidence>
<evidence type="ECO:0000269" key="21">
    <source>
    </source>
</evidence>
<evidence type="ECO:0000269" key="22">
    <source>
    </source>
</evidence>
<evidence type="ECO:0000269" key="23">
    <source>
    </source>
</evidence>
<evidence type="ECO:0000269" key="24">
    <source>
    </source>
</evidence>
<evidence type="ECO:0000269" key="25">
    <source>
    </source>
</evidence>
<evidence type="ECO:0000269" key="26">
    <source>
    </source>
</evidence>
<evidence type="ECO:0000269" key="27">
    <source>
    </source>
</evidence>
<evidence type="ECO:0000269" key="28">
    <source>
    </source>
</evidence>
<evidence type="ECO:0000269" key="29">
    <source>
    </source>
</evidence>
<evidence type="ECO:0000269" key="30">
    <source>
    </source>
</evidence>
<evidence type="ECO:0000269" key="31">
    <source>
    </source>
</evidence>
<evidence type="ECO:0000269" key="32">
    <source>
    </source>
</evidence>
<evidence type="ECO:0000269" key="33">
    <source>
    </source>
</evidence>
<evidence type="ECO:0000269" key="34">
    <source>
    </source>
</evidence>
<evidence type="ECO:0000269" key="35">
    <source>
    </source>
</evidence>
<evidence type="ECO:0000269" key="36">
    <source>
    </source>
</evidence>
<evidence type="ECO:0000269" key="37">
    <source>
    </source>
</evidence>
<evidence type="ECO:0000305" key="38"/>
<evidence type="ECO:0000312" key="39">
    <source>
        <dbReference type="FlyBase" id="FBgn0004872"/>
    </source>
</evidence>
<evidence type="ECO:0000312" key="40">
    <source>
        <dbReference type="Proteomes" id="UP000000803"/>
    </source>
</evidence>
<evidence type="ECO:0007829" key="41">
    <source>
        <dbReference type="PDB" id="5YGD"/>
    </source>
</evidence>
<evidence type="ECO:0007829" key="42">
    <source>
        <dbReference type="PDB" id="6KR6"/>
    </source>
</evidence>
<proteinExistence type="evidence at protein level"/>
<comment type="function">
    <text evidence="5 6 7 8 9 10 11 14 15 18 19 20 21 22 23 26 30 31 34 35 36 37">Acts via the piwi-interacting RNA (piRNA) metabolic process, which mediates the repression of transposable elements during meiosis by forming complexes composed of piRNAs and Piwi proteins and governs the methylation and subsequent repression of transposons (PubMed:15817569, PubMed:17346786, PubMed:26808625). Directly binds piRNAs, a class of 24 to 30 nucleotide RNAs that are generated by a Dicer-independent mechanism and are primarily derived from transposons and other repeated sequence elements (PubMed:16882972). In ovarian somatic cells, mediates silencing of transposable elements at the transcriptional level in a mael-dependent manner (PubMed:23159368, PubMed:28472469). Involved in silencing of long terminal repeat (LTR) retrotransposons in male germline (PubMed:15817569). In testis, regulates spermatogenesis together with Tudor-SN (PubMed:26808625). In germ cells, mediates silencing at both transcriptional and post-transcriptional levels and is involved in the maintenance of populations of primary and secondary piRNAs. Piwi-mediated transcriptional silencing is accompanied by the formation of His3 trimethylated on 'Lys-10' (H3K9me3) associated euchromatin and heterochromatin (PubMed:23392610, PubMed:23434410, PubMed:24906153). In ovary, associates predominantly with antisense piRNAs that contain uridine at their 5' end. Association with sense piRNAs is also observed but to a lesser extent. Mediates a somatic signaling mechanism required for the maintenance of germline stem cells to produce and maintain a daughter germline stem cell (PubMed:10631171, PubMed:16949822, PubMed:9199372, PubMed:9851978). It is not essential for the further differentiation of the committed daughter cell (PubMed:9851978). Acts cell autonomously to promote germline stem cell division (PubMed:10631171, PubMed:9851978). Its role in stem cell maintenance does not seem to require nuclear localization. Required maternally for the posterior localization of osk and vas and for pole cell formation during oogenesis and early embryogenesis (PubMed:16949822). Together with Hop and Hsp83, mediates canalization, also known as developmental robustness, likely via epigenetic silencing of existing genetic variants and suppression of transposon-induced new genetic variation (PubMed:21186352). Shows RNA cleavage activity, although is not required for any of its known functions (PubMed:16882972, PubMed:23297219, PubMed:9199372). In the ovaries, forms a complex with nxf2, Panx and Nxt1 which acts as effectors of cotranscriptional transposon silencing (PubMed:31368590, PubMed:31384064).</text>
</comment>
<comment type="subunit">
    <text evidence="8 10 14 15 16 17 24 25 28 29 30 31 32 33 34 35">In the ovaries, part of a complex composed of at least Panx, nxf2, piwi and Nxt1 (PubMed:26472911, PubMed:26494711, PubMed:31368590, PubMed:31384064). The complex is knowns as Panx-induced co-transcriptional silencing (PICTS) complex, Panx-nxf2-dependent TAP/p15 silencing (Pandas complex), SFiNX (silencing factor interacting nuclear export variant) or piwi-Panx-nxf2-p15 (PPNP) complex (PubMed:26472911, PubMed:26494711, PubMed:31368590, PubMed:31384064). Interacts with vas; this interaction is RNA-independent (PubMed:16949822). Interacts with Dcr-1 and Fmr1; these interactions occur in polar granules (PubMed:16949822). Interacts (via N-terminal region) with CBX5 (via chromoshadow domain) (PubMed:17875665). Forms a complex with Hsp83 and Hop; probably Hop mediates the interaction between piwi and Hsp83 (PubMed:21186352). Forms a complex with Yb body components armi and fs(1)Yb; this interaction is required for proper piRNA loading and nuclear localization of piwi (PubMed:20966047). Interaction of Piwi and fs(1)Yb is likely to occur via armi (PubMed:20966047). Interacts (via the N-terminal region when unmethylated or symmetrically methylated at Arg-10) with papi (via Tudor domain) (PubMed:21447556, PubMed:29531043). Interacts with vret (PubMed:21831924). Interacts with Panx (PubMed:26472911, PubMed:26494711). Interacts with arx (PubMed:23913921, PubMed:23913922). Interacts with Tudor-SN (PubMed:26808625). Interacts with Nup358 (via N-terminus) (PubMed:29735528). Associates with the nuclear pore complex via interaction with Elys (PubMed:28472469). Interacts with thoc5; the interaction might be partly RNA-mediated (PubMed:28472469). Interacts with xmas-2 (PubMed:28472469).</text>
</comment>
<comment type="interaction">
    <interactant intactId="EBI-3406276">
        <id>Q9VKM1</id>
    </interactant>
    <interactant intactId="EBI-2890374">
        <id>Q6J5K9</id>
        <label>armi</label>
    </interactant>
    <organismsDiffer>false</organismsDiffer>
    <experiments>4</experiments>
</comment>
<comment type="interaction">
    <interactant intactId="EBI-3406276">
        <id>Q9VKM1</id>
    </interactant>
    <interactant intactId="EBI-184428">
        <id>Q9W2H9</id>
        <label>Panx</label>
    </interactant>
    <organismsDiffer>false</organismsDiffer>
    <experiments>2</experiments>
</comment>
<comment type="interaction">
    <interactant intactId="EBI-3406276">
        <id>Q9VKM1</id>
    </interactant>
    <interactant intactId="EBI-6915287">
        <id>Q9VQ91</id>
        <label>papi</label>
    </interactant>
    <organismsDiffer>false</organismsDiffer>
    <experiments>3</experiments>
</comment>
<comment type="subcellular location">
    <subcellularLocation>
        <location evidence="30 33">Cytoplasm</location>
    </subcellularLocation>
    <subcellularLocation>
        <location evidence="5">Nucleus</location>
        <location evidence="5">Nucleoplasm</location>
    </subcellularLocation>
    <subcellularLocation>
        <location evidence="30 33 35">Nucleus</location>
    </subcellularLocation>
    <subcellularLocation>
        <location evidence="31">Chromosome</location>
    </subcellularLocation>
    <text evidence="31">Component of polar granules. Present in the cytoplasm of the developing oocyte. At the mitotic cycle 11 translocates to the nucleus where it remains localized throughout germ-cell development and gonadogenesis. Localizes at genomic sites enriched for methylated H3K9. Interacts with chromatin at the nuclear pore complex (PubMed:28472469).</text>
</comment>
<comment type="tissue specificity">
    <text evidence="5 6 7 8 9 10 12 20 30 31 32 33 34 35 36 37">Expressed in ovaries (at protein level) (PubMed:28472469, PubMed:31368590, PubMed:31384064). Expressed somatically in ovariole terminal filament cells, epithelial sheath cells, cap cells and follicle cells (at protein level). Expressed in nurse cells and oocytes in developing egg chambers (at protein level) (PubMed:29531043, PubMed:29735528). In embryos, accumulates in pole cells (at protein level). In larval and adult testis, expressed in a germinal proliferative center at the apical tip containing somatic hub cells and mitotically dividing germ stem cells (at protein level) (PubMed:26808625).</text>
</comment>
<comment type="developmental stage">
    <text evidence="7 9 10 30 37">Expressed both maternally and zygotically. Expressed in the germarium, at low levels during oogenesis stages 1-6, at a lower level during stages 7-9, strongly at stage 10, eventually accumulates in early embryos and later in development the expression decreases (at protein level).</text>
</comment>
<comment type="PTM">
    <text evidence="12 27 32">Symmetrically dimethylated, most likely by csul (PubMed:19377467, PubMed:26212455, PubMed:29531043). Methylation at Arg-10 enhances binding to papi whereas methylation at Arg-7, Arg-9 or Arg-11 reduces binding affinity to papi (PubMed:29531043).</text>
</comment>
<comment type="PTM">
    <text evidence="15">Phosphorylated on serine and tyrosine residues in an Hsp83-dependent manner.</text>
</comment>
<comment type="disruption phenotype">
    <text evidence="30 36 37">Female mutants show normal ovarian development up to third instar larval stage (PubMed:26808625, PubMed:9199372, PubMed:9851978). However, adult mutant ovarioles contain germaria lacking germline cells and containing two normal or abnormal egg chambers as result of the failure of germline stem cell maintenance (PubMed:26808625, PubMed:9199372, PubMed:9851978). In adult testis, results in deregulation of transposon silencing (PubMed:26808625).</text>
</comment>
<comment type="similarity">
    <text evidence="38">Belongs to the argonaute family. Piwi subfamily.</text>
</comment>
<comment type="sequence caution" evidence="38">
    <conflict type="erroneous initiation">
        <sequence resource="EMBL-CDS" id="AAR82763"/>
    </conflict>
    <text>Extended N-terminus.</text>
</comment>
<comment type="sequence caution" evidence="38">
    <conflict type="erroneous initiation">
        <sequence resource="EMBL-CDS" id="AAR82805"/>
    </conflict>
    <text>Extended N-terminus.</text>
</comment>
<comment type="sequence caution" evidence="38">
    <conflict type="erroneous initiation">
        <sequence resource="EMBL-CDS" id="ACN43727"/>
    </conflict>
    <text>Extended N-terminus.</text>
</comment>